<evidence type="ECO:0000250" key="1">
    <source>
        <dbReference type="UniProtKB" id="Q9Y606"/>
    </source>
</evidence>
<evidence type="ECO:0000255" key="2"/>
<evidence type="ECO:0000256" key="3">
    <source>
        <dbReference type="SAM" id="MobiDB-lite"/>
    </source>
</evidence>
<evidence type="ECO:0000269" key="4">
    <source>
    </source>
</evidence>
<evidence type="ECO:0000269" key="5">
    <source>
    </source>
</evidence>
<evidence type="ECO:0000269" key="6">
    <source>
    </source>
</evidence>
<evidence type="ECO:0000269" key="7">
    <source>
    </source>
</evidence>
<evidence type="ECO:0000269" key="8">
    <source>
    </source>
</evidence>
<evidence type="ECO:0000303" key="9">
    <source>
    </source>
</evidence>
<evidence type="ECO:0000303" key="10">
    <source>
    </source>
</evidence>
<evidence type="ECO:0000305" key="11"/>
<evidence type="ECO:0000305" key="12">
    <source>
    </source>
</evidence>
<evidence type="ECO:0000312" key="13">
    <source>
        <dbReference type="HGNC" id="HGNC:17170"/>
    </source>
</evidence>
<keyword id="KW-0025">Alternative splicing</keyword>
<keyword id="KW-0413">Isomerase</keyword>
<keyword id="KW-0496">Mitochondrion</keyword>
<keyword id="KW-0507">mRNA processing</keyword>
<keyword id="KW-1267">Proteomics identification</keyword>
<keyword id="KW-1185">Reference proteome</keyword>
<keyword id="KW-0809">Transit peptide</keyword>
<keyword id="KW-0819">tRNA processing</keyword>
<protein>
    <recommendedName>
        <fullName evidence="11">Pseudouridylate synthase TRUB2, mitochondrial</fullName>
        <ecNumber evidence="5 7">5.4.99.-</ecNumber>
    </recommendedName>
    <alternativeName>
        <fullName evidence="9">TruB pseudouridine synthase homolog 2</fullName>
    </alternativeName>
    <alternativeName>
        <fullName evidence="11">tRNA pseudouridine 55 synthase TRUB2</fullName>
        <shortName evidence="11">Psi55 synthase TRUB2</shortName>
        <ecNumber evidence="8">5.4.99.25</ecNumber>
    </alternativeName>
</protein>
<accession>O95900</accession>
<accession>B7Z7G5</accession>
<reference key="1">
    <citation type="submission" date="1999-02" db="EMBL/GenBank/DDBJ databases">
        <authorList>
            <person name="Mei G."/>
            <person name="Yu W."/>
            <person name="Gibbs R.A."/>
        </authorList>
    </citation>
    <scope>NUCLEOTIDE SEQUENCE [LARGE SCALE MRNA] (ISOFORM 1)</scope>
    <source>
        <tissue>Brain</tissue>
    </source>
</reference>
<reference key="2">
    <citation type="journal article" date="2004" name="Nat. Genet.">
        <title>Complete sequencing and characterization of 21,243 full-length human cDNAs.</title>
        <authorList>
            <person name="Ota T."/>
            <person name="Suzuki Y."/>
            <person name="Nishikawa T."/>
            <person name="Otsuki T."/>
            <person name="Sugiyama T."/>
            <person name="Irie R."/>
            <person name="Wakamatsu A."/>
            <person name="Hayashi K."/>
            <person name="Sato H."/>
            <person name="Nagai K."/>
            <person name="Kimura K."/>
            <person name="Makita H."/>
            <person name="Sekine M."/>
            <person name="Obayashi M."/>
            <person name="Nishi T."/>
            <person name="Shibahara T."/>
            <person name="Tanaka T."/>
            <person name="Ishii S."/>
            <person name="Yamamoto J."/>
            <person name="Saito K."/>
            <person name="Kawai Y."/>
            <person name="Isono Y."/>
            <person name="Nakamura Y."/>
            <person name="Nagahari K."/>
            <person name="Murakami K."/>
            <person name="Yasuda T."/>
            <person name="Iwayanagi T."/>
            <person name="Wagatsuma M."/>
            <person name="Shiratori A."/>
            <person name="Sudo H."/>
            <person name="Hosoiri T."/>
            <person name="Kaku Y."/>
            <person name="Kodaira H."/>
            <person name="Kondo H."/>
            <person name="Sugawara M."/>
            <person name="Takahashi M."/>
            <person name="Kanda K."/>
            <person name="Yokoi T."/>
            <person name="Furuya T."/>
            <person name="Kikkawa E."/>
            <person name="Omura Y."/>
            <person name="Abe K."/>
            <person name="Kamihara K."/>
            <person name="Katsuta N."/>
            <person name="Sato K."/>
            <person name="Tanikawa M."/>
            <person name="Yamazaki M."/>
            <person name="Ninomiya K."/>
            <person name="Ishibashi T."/>
            <person name="Yamashita H."/>
            <person name="Murakawa K."/>
            <person name="Fujimori K."/>
            <person name="Tanai H."/>
            <person name="Kimata M."/>
            <person name="Watanabe M."/>
            <person name="Hiraoka S."/>
            <person name="Chiba Y."/>
            <person name="Ishida S."/>
            <person name="Ono Y."/>
            <person name="Takiguchi S."/>
            <person name="Watanabe S."/>
            <person name="Yosida M."/>
            <person name="Hotuta T."/>
            <person name="Kusano J."/>
            <person name="Kanehori K."/>
            <person name="Takahashi-Fujii A."/>
            <person name="Hara H."/>
            <person name="Tanase T.-O."/>
            <person name="Nomura Y."/>
            <person name="Togiya S."/>
            <person name="Komai F."/>
            <person name="Hara R."/>
            <person name="Takeuchi K."/>
            <person name="Arita M."/>
            <person name="Imose N."/>
            <person name="Musashino K."/>
            <person name="Yuuki H."/>
            <person name="Oshima A."/>
            <person name="Sasaki N."/>
            <person name="Aotsuka S."/>
            <person name="Yoshikawa Y."/>
            <person name="Matsunawa H."/>
            <person name="Ichihara T."/>
            <person name="Shiohata N."/>
            <person name="Sano S."/>
            <person name="Moriya S."/>
            <person name="Momiyama H."/>
            <person name="Satoh N."/>
            <person name="Takami S."/>
            <person name="Terashima Y."/>
            <person name="Suzuki O."/>
            <person name="Nakagawa S."/>
            <person name="Senoh A."/>
            <person name="Mizoguchi H."/>
            <person name="Goto Y."/>
            <person name="Shimizu F."/>
            <person name="Wakebe H."/>
            <person name="Hishigaki H."/>
            <person name="Watanabe T."/>
            <person name="Sugiyama A."/>
            <person name="Takemoto M."/>
            <person name="Kawakami B."/>
            <person name="Yamazaki M."/>
            <person name="Watanabe K."/>
            <person name="Kumagai A."/>
            <person name="Itakura S."/>
            <person name="Fukuzumi Y."/>
            <person name="Fujimori Y."/>
            <person name="Komiyama M."/>
            <person name="Tashiro H."/>
            <person name="Tanigami A."/>
            <person name="Fujiwara T."/>
            <person name="Ono T."/>
            <person name="Yamada K."/>
            <person name="Fujii Y."/>
            <person name="Ozaki K."/>
            <person name="Hirao M."/>
            <person name="Ohmori Y."/>
            <person name="Kawabata A."/>
            <person name="Hikiji T."/>
            <person name="Kobatake N."/>
            <person name="Inagaki H."/>
            <person name="Ikema Y."/>
            <person name="Okamoto S."/>
            <person name="Okitani R."/>
            <person name="Kawakami T."/>
            <person name="Noguchi S."/>
            <person name="Itoh T."/>
            <person name="Shigeta K."/>
            <person name="Senba T."/>
            <person name="Matsumura K."/>
            <person name="Nakajima Y."/>
            <person name="Mizuno T."/>
            <person name="Morinaga M."/>
            <person name="Sasaki M."/>
            <person name="Togashi T."/>
            <person name="Oyama M."/>
            <person name="Hata H."/>
            <person name="Watanabe M."/>
            <person name="Komatsu T."/>
            <person name="Mizushima-Sugano J."/>
            <person name="Satoh T."/>
            <person name="Shirai Y."/>
            <person name="Takahashi Y."/>
            <person name="Nakagawa K."/>
            <person name="Okumura K."/>
            <person name="Nagase T."/>
            <person name="Nomura N."/>
            <person name="Kikuchi H."/>
            <person name="Masuho Y."/>
            <person name="Yamashita R."/>
            <person name="Nakai K."/>
            <person name="Yada T."/>
            <person name="Nakamura Y."/>
            <person name="Ohara O."/>
            <person name="Isogai T."/>
            <person name="Sugano S."/>
        </authorList>
    </citation>
    <scope>NUCLEOTIDE SEQUENCE [LARGE SCALE MRNA] (ISOFORMS 1 AND 2)</scope>
    <source>
        <tissue>Placenta</tissue>
        <tissue>Testis</tissue>
    </source>
</reference>
<reference key="3">
    <citation type="journal article" date="2004" name="Nature">
        <title>DNA sequence and analysis of human chromosome 9.</title>
        <authorList>
            <person name="Humphray S.J."/>
            <person name="Oliver K."/>
            <person name="Hunt A.R."/>
            <person name="Plumb R.W."/>
            <person name="Loveland J.E."/>
            <person name="Howe K.L."/>
            <person name="Andrews T.D."/>
            <person name="Searle S."/>
            <person name="Hunt S.E."/>
            <person name="Scott C.E."/>
            <person name="Jones M.C."/>
            <person name="Ainscough R."/>
            <person name="Almeida J.P."/>
            <person name="Ambrose K.D."/>
            <person name="Ashwell R.I.S."/>
            <person name="Babbage A.K."/>
            <person name="Babbage S."/>
            <person name="Bagguley C.L."/>
            <person name="Bailey J."/>
            <person name="Banerjee R."/>
            <person name="Barker D.J."/>
            <person name="Barlow K.F."/>
            <person name="Bates K."/>
            <person name="Beasley H."/>
            <person name="Beasley O."/>
            <person name="Bird C.P."/>
            <person name="Bray-Allen S."/>
            <person name="Brown A.J."/>
            <person name="Brown J.Y."/>
            <person name="Burford D."/>
            <person name="Burrill W."/>
            <person name="Burton J."/>
            <person name="Carder C."/>
            <person name="Carter N.P."/>
            <person name="Chapman J.C."/>
            <person name="Chen Y."/>
            <person name="Clarke G."/>
            <person name="Clark S.Y."/>
            <person name="Clee C.M."/>
            <person name="Clegg S."/>
            <person name="Collier R.E."/>
            <person name="Corby N."/>
            <person name="Crosier M."/>
            <person name="Cummings A.T."/>
            <person name="Davies J."/>
            <person name="Dhami P."/>
            <person name="Dunn M."/>
            <person name="Dutta I."/>
            <person name="Dyer L.W."/>
            <person name="Earthrowl M.E."/>
            <person name="Faulkner L."/>
            <person name="Fleming C.J."/>
            <person name="Frankish A."/>
            <person name="Frankland J.A."/>
            <person name="French L."/>
            <person name="Fricker D.G."/>
            <person name="Garner P."/>
            <person name="Garnett J."/>
            <person name="Ghori J."/>
            <person name="Gilbert J.G.R."/>
            <person name="Glison C."/>
            <person name="Grafham D.V."/>
            <person name="Gribble S."/>
            <person name="Griffiths C."/>
            <person name="Griffiths-Jones S."/>
            <person name="Grocock R."/>
            <person name="Guy J."/>
            <person name="Hall R.E."/>
            <person name="Hammond S."/>
            <person name="Harley J.L."/>
            <person name="Harrison E.S.I."/>
            <person name="Hart E.A."/>
            <person name="Heath P.D."/>
            <person name="Henderson C.D."/>
            <person name="Hopkins B.L."/>
            <person name="Howard P.J."/>
            <person name="Howden P.J."/>
            <person name="Huckle E."/>
            <person name="Johnson C."/>
            <person name="Johnson D."/>
            <person name="Joy A.A."/>
            <person name="Kay M."/>
            <person name="Keenan S."/>
            <person name="Kershaw J.K."/>
            <person name="Kimberley A.M."/>
            <person name="King A."/>
            <person name="Knights A."/>
            <person name="Laird G.K."/>
            <person name="Langford C."/>
            <person name="Lawlor S."/>
            <person name="Leongamornlert D.A."/>
            <person name="Leversha M."/>
            <person name="Lloyd C."/>
            <person name="Lloyd D.M."/>
            <person name="Lovell J."/>
            <person name="Martin S."/>
            <person name="Mashreghi-Mohammadi M."/>
            <person name="Matthews L."/>
            <person name="McLaren S."/>
            <person name="McLay K.E."/>
            <person name="McMurray A."/>
            <person name="Milne S."/>
            <person name="Nickerson T."/>
            <person name="Nisbett J."/>
            <person name="Nordsiek G."/>
            <person name="Pearce A.V."/>
            <person name="Peck A.I."/>
            <person name="Porter K.M."/>
            <person name="Pandian R."/>
            <person name="Pelan S."/>
            <person name="Phillimore B."/>
            <person name="Povey S."/>
            <person name="Ramsey Y."/>
            <person name="Rand V."/>
            <person name="Scharfe M."/>
            <person name="Sehra H.K."/>
            <person name="Shownkeen R."/>
            <person name="Sims S.K."/>
            <person name="Skuce C.D."/>
            <person name="Smith M."/>
            <person name="Steward C.A."/>
            <person name="Swarbreck D."/>
            <person name="Sycamore N."/>
            <person name="Tester J."/>
            <person name="Thorpe A."/>
            <person name="Tracey A."/>
            <person name="Tromans A."/>
            <person name="Thomas D.W."/>
            <person name="Wall M."/>
            <person name="Wallis J.M."/>
            <person name="West A.P."/>
            <person name="Whitehead S.L."/>
            <person name="Willey D.L."/>
            <person name="Williams S.A."/>
            <person name="Wilming L."/>
            <person name="Wray P.W."/>
            <person name="Young L."/>
            <person name="Ashurst J.L."/>
            <person name="Coulson A."/>
            <person name="Blocker H."/>
            <person name="Durbin R.M."/>
            <person name="Sulston J.E."/>
            <person name="Hubbard T."/>
            <person name="Jackson M.J."/>
            <person name="Bentley D.R."/>
            <person name="Beck S."/>
            <person name="Rogers J."/>
            <person name="Dunham I."/>
        </authorList>
    </citation>
    <scope>NUCLEOTIDE SEQUENCE [LARGE SCALE GENOMIC DNA]</scope>
</reference>
<reference key="4">
    <citation type="journal article" date="2004" name="Genome Res.">
        <title>The status, quality, and expansion of the NIH full-length cDNA project: the Mammalian Gene Collection (MGC).</title>
        <authorList>
            <consortium name="The MGC Project Team"/>
        </authorList>
    </citation>
    <scope>NUCLEOTIDE SEQUENCE [LARGE SCALE MRNA] (ISOFORM 1)</scope>
    <source>
        <tissue>Placenta</tissue>
    </source>
</reference>
<reference key="5">
    <citation type="journal article" date="2003" name="Int. J. Mol. Med.">
        <title>The human TruB family of pseudouridine synthase genes, including the Dyskeratosis Congenita 1 gene and the novel member TRUB1.</title>
        <authorList>
            <person name="Zucchini C."/>
            <person name="Strippoli P."/>
            <person name="Biolchi A."/>
            <person name="Solmi R."/>
            <person name="Lenzi L."/>
            <person name="D'Addabbo P."/>
            <person name="Carinci P."/>
            <person name="Valvassori L."/>
        </authorList>
    </citation>
    <scope>IDENTIFICATION</scope>
    <scope>NOMENCLATURE</scope>
</reference>
<reference key="6">
    <citation type="journal article" date="2011" name="BMC Syst. Biol.">
        <title>Initial characterization of the human central proteome.</title>
        <authorList>
            <person name="Burkard T.R."/>
            <person name="Planyavsky M."/>
            <person name="Kaupe I."/>
            <person name="Breitwieser F.P."/>
            <person name="Buerckstuemmer T."/>
            <person name="Bennett K.L."/>
            <person name="Superti-Furga G."/>
            <person name="Colinge J."/>
        </authorList>
    </citation>
    <scope>IDENTIFICATION BY MASS SPECTROMETRY [LARGE SCALE ANALYSIS]</scope>
</reference>
<reference key="7">
    <citation type="journal article" date="2016" name="Cell Metab.">
        <title>A Genome-wide CRISPR Death Screen Identifies Genes Essential for Oxidative Phosphorylation.</title>
        <authorList>
            <person name="Arroyo J.D."/>
            <person name="Jourdain A.A."/>
            <person name="Calvo S.E."/>
            <person name="Ballarano C.A."/>
            <person name="Doench J.G."/>
            <person name="Root D.E."/>
            <person name="Mootha V.K."/>
        </authorList>
    </citation>
    <scope>SUBUNIT</scope>
    <scope>FUNCTION</scope>
</reference>
<reference key="8">
    <citation type="journal article" date="2017" name="EMBO Rep.">
        <title>A pseudouridine synthase module is essential for mitochondrial protein synthesis and cell viability.</title>
        <authorList>
            <person name="Antonicka H."/>
            <person name="Choquet K."/>
            <person name="Lin Z.Y."/>
            <person name="Gingras A.C."/>
            <person name="Kleinman C.L."/>
            <person name="Shoubridge E.A."/>
        </authorList>
    </citation>
    <scope>FUNCTION</scope>
    <scope>SUBCELLULAR LOCATION</scope>
    <scope>CATALYTIC ACTIVITY</scope>
</reference>
<reference key="9">
    <citation type="journal article" date="2017" name="J. Biol. Chem.">
        <title>The pseudouridine synthase RPUSD4 is an essential component of mitochondrial RNA granules.</title>
        <authorList>
            <person name="Zaganelli S."/>
            <person name="Rebelo-Guiomar P."/>
            <person name="Maundrell K."/>
            <person name="Rozanska A."/>
            <person name="Pierredon S."/>
            <person name="Powell C.A."/>
            <person name="Jourdain A.A."/>
            <person name="Hulo N."/>
            <person name="Lightowlers R.N."/>
            <person name="Chrzanowska-Lightowlers Z.M."/>
            <person name="Minczuk M."/>
            <person name="Martinou J.C."/>
        </authorList>
    </citation>
    <scope>SUBCELLULAR LOCATION</scope>
</reference>
<reference key="10">
    <citation type="journal article" date="2019" name="Nat. Chem. Biol.">
        <title>mRNA structure determines modification by pseudouridine synthase 1.</title>
        <authorList>
            <person name="Carlile T.M."/>
            <person name="Martinez N.M."/>
            <person name="Schaening C."/>
            <person name="Su A."/>
            <person name="Bell T.A."/>
            <person name="Zinshteyn B."/>
            <person name="Gilbert W.V."/>
        </authorList>
    </citation>
    <scope>FUNCTION</scope>
    <scope>CATALYTIC ACTIVITY</scope>
</reference>
<reference key="11">
    <citation type="journal article" date="2021" name="RNA">
        <title>Mammalian nuclear TRUB1, mitochondrial TRUB2, and cytoplasmic PUS10 produce conserved pseudouridine 55 in different sets of tRNA.</title>
        <authorList>
            <person name="Mukhopadhyay S."/>
            <person name="Deogharia M."/>
            <person name="Gupta R."/>
        </authorList>
    </citation>
    <scope>FUNCTION</scope>
    <scope>CATALYTIC ACTIVITY</scope>
    <scope>SUBCELLULAR LOCATION</scope>
</reference>
<dbReference type="EC" id="5.4.99.-" evidence="5 7"/>
<dbReference type="EC" id="5.4.99.25" evidence="8"/>
<dbReference type="EMBL" id="AF131848">
    <property type="protein sequence ID" value="AAD20059.1"/>
    <property type="molecule type" value="mRNA"/>
</dbReference>
<dbReference type="EMBL" id="AK001956">
    <property type="protein sequence ID" value="BAA92001.1"/>
    <property type="molecule type" value="mRNA"/>
</dbReference>
<dbReference type="EMBL" id="AK301986">
    <property type="protein sequence ID" value="BAH13601.1"/>
    <property type="molecule type" value="mRNA"/>
</dbReference>
<dbReference type="EMBL" id="AL359091">
    <property type="status" value="NOT_ANNOTATED_CDS"/>
    <property type="molecule type" value="Genomic_DNA"/>
</dbReference>
<dbReference type="EMBL" id="BC001457">
    <property type="protein sequence ID" value="AAH01457.1"/>
    <property type="molecule type" value="mRNA"/>
</dbReference>
<dbReference type="CCDS" id="CCDS6897.1">
    <molecule id="O95900-1"/>
</dbReference>
<dbReference type="RefSeq" id="NP_001316790.1">
    <property type="nucleotide sequence ID" value="NM_001329861.1"/>
</dbReference>
<dbReference type="RefSeq" id="NP_001316791.1">
    <molecule id="O95900-2"/>
    <property type="nucleotide sequence ID" value="NM_001329862.2"/>
</dbReference>
<dbReference type="RefSeq" id="NP_001316792.1">
    <property type="nucleotide sequence ID" value="NM_001329863.1"/>
</dbReference>
<dbReference type="RefSeq" id="NP_056494.1">
    <molecule id="O95900-1"/>
    <property type="nucleotide sequence ID" value="NM_015679.3"/>
</dbReference>
<dbReference type="SMR" id="O95900"/>
<dbReference type="BioGRID" id="117942">
    <property type="interactions" value="365"/>
</dbReference>
<dbReference type="CORUM" id="O95900"/>
<dbReference type="FunCoup" id="O95900">
    <property type="interactions" value="906"/>
</dbReference>
<dbReference type="IntAct" id="O95900">
    <property type="interactions" value="96"/>
</dbReference>
<dbReference type="MINT" id="O95900"/>
<dbReference type="STRING" id="9606.ENSP00000361982"/>
<dbReference type="iPTMnet" id="O95900"/>
<dbReference type="PhosphoSitePlus" id="O95900"/>
<dbReference type="SwissPalm" id="O95900"/>
<dbReference type="BioMuta" id="TRUB2"/>
<dbReference type="jPOST" id="O95900"/>
<dbReference type="MassIVE" id="O95900"/>
<dbReference type="PaxDb" id="9606-ENSP00000361982"/>
<dbReference type="PeptideAtlas" id="O95900"/>
<dbReference type="ProteomicsDB" id="51120">
    <molecule id="O95900-1"/>
</dbReference>
<dbReference type="ProteomicsDB" id="6868"/>
<dbReference type="Pumba" id="O95900"/>
<dbReference type="Antibodypedia" id="17439">
    <property type="antibodies" value="150 antibodies from 23 providers"/>
</dbReference>
<dbReference type="DNASU" id="26995"/>
<dbReference type="Ensembl" id="ENST00000372890.6">
    <molecule id="O95900-1"/>
    <property type="protein sequence ID" value="ENSP00000361982.4"/>
    <property type="gene ID" value="ENSG00000167112.10"/>
</dbReference>
<dbReference type="GeneID" id="26995"/>
<dbReference type="KEGG" id="hsa:26995"/>
<dbReference type="MANE-Select" id="ENST00000372890.6">
    <property type="protein sequence ID" value="ENSP00000361982.4"/>
    <property type="RefSeq nucleotide sequence ID" value="NM_015679.3"/>
    <property type="RefSeq protein sequence ID" value="NP_056494.1"/>
</dbReference>
<dbReference type="UCSC" id="uc004buq.2">
    <molecule id="O95900-1"/>
    <property type="organism name" value="human"/>
</dbReference>
<dbReference type="AGR" id="HGNC:17170"/>
<dbReference type="CTD" id="26995"/>
<dbReference type="GeneCards" id="TRUB2"/>
<dbReference type="HGNC" id="HGNC:17170">
    <property type="gene designation" value="TRUB2"/>
</dbReference>
<dbReference type="HPA" id="ENSG00000167112">
    <property type="expression patterns" value="Low tissue specificity"/>
</dbReference>
<dbReference type="MIM" id="610727">
    <property type="type" value="gene"/>
</dbReference>
<dbReference type="neXtProt" id="NX_O95900"/>
<dbReference type="OpenTargets" id="ENSG00000167112"/>
<dbReference type="PharmGKB" id="PA38209"/>
<dbReference type="VEuPathDB" id="HostDB:ENSG00000167112"/>
<dbReference type="eggNOG" id="KOG2559">
    <property type="taxonomic scope" value="Eukaryota"/>
</dbReference>
<dbReference type="GeneTree" id="ENSGT00940000156773"/>
<dbReference type="HOGENOM" id="CLU_032087_1_1_1"/>
<dbReference type="InParanoid" id="O95900"/>
<dbReference type="OMA" id="YHVTARM"/>
<dbReference type="OrthoDB" id="9995526at2759"/>
<dbReference type="PAN-GO" id="O95900">
    <property type="GO annotations" value="0 GO annotations based on evolutionary models"/>
</dbReference>
<dbReference type="PhylomeDB" id="O95900"/>
<dbReference type="TreeFam" id="TF320759"/>
<dbReference type="PathwayCommons" id="O95900"/>
<dbReference type="SignaLink" id="O95900"/>
<dbReference type="BioGRID-ORCS" id="26995">
    <property type="hits" value="207 hits in 1157 CRISPR screens"/>
</dbReference>
<dbReference type="CD-CODE" id="5965E019">
    <property type="entry name" value="mtRNA granule"/>
</dbReference>
<dbReference type="ChiTaRS" id="TRUB2">
    <property type="organism name" value="human"/>
</dbReference>
<dbReference type="GenomeRNAi" id="26995"/>
<dbReference type="Pharos" id="O95900">
    <property type="development level" value="Tdark"/>
</dbReference>
<dbReference type="PRO" id="PR:O95900"/>
<dbReference type="Proteomes" id="UP000005640">
    <property type="component" value="Chromosome 9"/>
</dbReference>
<dbReference type="RNAct" id="O95900">
    <property type="molecule type" value="protein"/>
</dbReference>
<dbReference type="Bgee" id="ENSG00000167112">
    <property type="expression patterns" value="Expressed in kidney epithelium and 178 other cell types or tissues"/>
</dbReference>
<dbReference type="ExpressionAtlas" id="O95900">
    <property type="expression patterns" value="baseline and differential"/>
</dbReference>
<dbReference type="GO" id="GO:0005759">
    <property type="term" value="C:mitochondrial matrix"/>
    <property type="evidence" value="ECO:0000314"/>
    <property type="project" value="FlyBase"/>
</dbReference>
<dbReference type="GO" id="GO:0005739">
    <property type="term" value="C:mitochondrion"/>
    <property type="evidence" value="ECO:0000314"/>
    <property type="project" value="FlyBase"/>
</dbReference>
<dbReference type="GO" id="GO:0035770">
    <property type="term" value="C:ribonucleoprotein granule"/>
    <property type="evidence" value="ECO:0000314"/>
    <property type="project" value="FlyBase"/>
</dbReference>
<dbReference type="GO" id="GO:0009982">
    <property type="term" value="F:pseudouridine synthase activity"/>
    <property type="evidence" value="ECO:0000314"/>
    <property type="project" value="UniProtKB"/>
</dbReference>
<dbReference type="GO" id="GO:0003723">
    <property type="term" value="F:RNA binding"/>
    <property type="evidence" value="ECO:0007005"/>
    <property type="project" value="UniProtKB"/>
</dbReference>
<dbReference type="GO" id="GO:0160148">
    <property type="term" value="F:tRNA pseudouridine(55) synthase activity"/>
    <property type="evidence" value="ECO:0007669"/>
    <property type="project" value="RHEA"/>
</dbReference>
<dbReference type="GO" id="GO:0006397">
    <property type="term" value="P:mRNA processing"/>
    <property type="evidence" value="ECO:0007669"/>
    <property type="project" value="UniProtKB-KW"/>
</dbReference>
<dbReference type="GO" id="GO:1990481">
    <property type="term" value="P:mRNA pseudouridine synthesis"/>
    <property type="evidence" value="ECO:0000314"/>
    <property type="project" value="FlyBase"/>
</dbReference>
<dbReference type="GO" id="GO:0070131">
    <property type="term" value="P:positive regulation of mitochondrial translation"/>
    <property type="evidence" value="ECO:0000315"/>
    <property type="project" value="UniProtKB"/>
</dbReference>
<dbReference type="GO" id="GO:0008033">
    <property type="term" value="P:tRNA processing"/>
    <property type="evidence" value="ECO:0007669"/>
    <property type="project" value="UniProtKB-KW"/>
</dbReference>
<dbReference type="CDD" id="cd02868">
    <property type="entry name" value="PseudoU_synth_hTruB2_like"/>
    <property type="match status" value="1"/>
</dbReference>
<dbReference type="Gene3D" id="3.30.2350.10">
    <property type="entry name" value="Pseudouridine synthase"/>
    <property type="match status" value="1"/>
</dbReference>
<dbReference type="InterPro" id="IPR020103">
    <property type="entry name" value="PsdUridine_synth_cat_dom_sf"/>
</dbReference>
<dbReference type="InterPro" id="IPR002501">
    <property type="entry name" value="PsdUridine_synth_N"/>
</dbReference>
<dbReference type="InterPro" id="IPR039048">
    <property type="entry name" value="Trub2"/>
</dbReference>
<dbReference type="PANTHER" id="PTHR13195">
    <property type="entry name" value="PSEUDOURIDINE SYNTHASE-RELATED"/>
    <property type="match status" value="1"/>
</dbReference>
<dbReference type="PANTHER" id="PTHR13195:SF0">
    <property type="entry name" value="PSEUDOURIDYLATE SYNTHASE TRUB2, MITOCHONDRIAL"/>
    <property type="match status" value="1"/>
</dbReference>
<dbReference type="Pfam" id="PF01509">
    <property type="entry name" value="TruB_N"/>
    <property type="match status" value="1"/>
</dbReference>
<dbReference type="SUPFAM" id="SSF55120">
    <property type="entry name" value="Pseudouridine synthase"/>
    <property type="match status" value="1"/>
</dbReference>
<gene>
    <name evidence="9 13" type="primary">TRUB2</name>
</gene>
<organism>
    <name type="scientific">Homo sapiens</name>
    <name type="common">Human</name>
    <dbReference type="NCBI Taxonomy" id="9606"/>
    <lineage>
        <taxon>Eukaryota</taxon>
        <taxon>Metazoa</taxon>
        <taxon>Chordata</taxon>
        <taxon>Craniata</taxon>
        <taxon>Vertebrata</taxon>
        <taxon>Euteleostomi</taxon>
        <taxon>Mammalia</taxon>
        <taxon>Eutheria</taxon>
        <taxon>Euarchontoglires</taxon>
        <taxon>Primates</taxon>
        <taxon>Haplorrhini</taxon>
        <taxon>Catarrhini</taxon>
        <taxon>Hominidae</taxon>
        <taxon>Homo</taxon>
    </lineage>
</organism>
<comment type="function">
    <text evidence="4 5 7 8">Minor enzyme contributing to the isomerization of uridine to pseudouridine (pseudouridylation) of specific mitochondrial mRNAs (mt-mRNAs) such as COXI and COXIII mt-mRNAs (PubMed:27974379, PubMed:31477916). As a component of a functional protein-RNA module, consisting of RCC1L, NGRN, RPUSD3, RPUSD4, TRUB2, FASTKD2 and 16S mitochondrial ribosomal RNA (16S mt-rRNA), controls 16S mt-rRNA abundance and is required for intra-mitochondrial translation (PubMed:27667664). Also catalyzes pseudouridylation of some tRNAs, including synthesis of pseudouridine(55) from uracil-55, in the psi GC loop of a subset of tRNAs (PubMed:33023933).</text>
</comment>
<comment type="catalytic activity">
    <reaction evidence="7 12">
        <text>a uridine in mRNA = a pseudouridine in mRNA</text>
        <dbReference type="Rhea" id="RHEA:56644"/>
        <dbReference type="Rhea" id="RHEA-COMP:14658"/>
        <dbReference type="Rhea" id="RHEA-COMP:14659"/>
        <dbReference type="ChEBI" id="CHEBI:65314"/>
        <dbReference type="ChEBI" id="CHEBI:65315"/>
    </reaction>
</comment>
<comment type="catalytic activity">
    <reaction evidence="8">
        <text>uridine(55) in tRNA = pseudouridine(55) in tRNA</text>
        <dbReference type="Rhea" id="RHEA:42532"/>
        <dbReference type="Rhea" id="RHEA-COMP:10101"/>
        <dbReference type="Rhea" id="RHEA-COMP:10102"/>
        <dbReference type="ChEBI" id="CHEBI:65314"/>
        <dbReference type="ChEBI" id="CHEBI:65315"/>
        <dbReference type="EC" id="5.4.99.25"/>
    </reaction>
    <physiologicalReaction direction="left-to-right" evidence="8">
        <dbReference type="Rhea" id="RHEA:42533"/>
    </physiologicalReaction>
</comment>
<comment type="subunit">
    <text evidence="4">Forms a regulatory protein-RNA complex, consisting of RCC1L, NGRN, RPUSD3, RPUSD4, TRUB2, FASTKD2 and 16S mt-rRNA.</text>
</comment>
<comment type="subcellular location">
    <subcellularLocation>
        <location evidence="5 8">Mitochondrion matrix</location>
    </subcellularLocation>
    <text evidence="5 6">Localizes to mitochondrial RNA granules, platforms for post-transcriptional RNA modification and ribosome assembly.</text>
</comment>
<comment type="alternative products">
    <event type="alternative splicing"/>
    <isoform>
        <id>O95900-1</id>
        <name>1</name>
        <sequence type="displayed"/>
    </isoform>
    <isoform>
        <id>O95900-2</id>
        <name>2</name>
        <sequence type="described" ref="VSP_056094"/>
    </isoform>
</comment>
<comment type="similarity">
    <text evidence="11">Belongs to the pseudouridine synthase TruB family.</text>
</comment>
<feature type="transit peptide" description="Mitochondrion" evidence="2">
    <location>
        <begin position="1"/>
        <end position="10"/>
    </location>
</feature>
<feature type="chain" id="PRO_0000252090" description="Pseudouridylate synthase TRUB2, mitochondrial">
    <location>
        <begin position="11"/>
        <end position="331"/>
    </location>
</feature>
<feature type="region of interest" description="Disordered" evidence="3">
    <location>
        <begin position="296"/>
        <end position="331"/>
    </location>
</feature>
<feature type="compositionally biased region" description="Polar residues" evidence="3">
    <location>
        <begin position="314"/>
        <end position="323"/>
    </location>
</feature>
<feature type="active site" description="Nucleophile" evidence="1">
    <location>
        <position position="98"/>
    </location>
</feature>
<feature type="splice variant" id="VSP_056094" description="In isoform 2." evidence="10">
    <location>
        <begin position="1"/>
        <end position="56"/>
    </location>
</feature>
<feature type="sequence variant" id="VAR_051608" description="In dbSNP:rs2231630.">
    <original>P</original>
    <variation>L</variation>
    <location>
        <position position="79"/>
    </location>
</feature>
<feature type="sequence variant" id="VAR_027749" description="In dbSNP:rs2072394.">
    <original>V</original>
    <variation>L</variation>
    <location>
        <position position="93"/>
    </location>
</feature>
<feature type="sequence variant" id="VAR_051609" description="In dbSNP:rs2231637.">
    <original>T</original>
    <variation>S</variation>
    <location>
        <position position="209"/>
    </location>
</feature>
<sequence length="331" mass="36694">MGSAGLSRLHGLFAVYKPPGLKWKHLRDTVELQLLKGLNARKPPAPKQRVRFLLGPMEGSEEKELTLTATSVPSFINHPLVCGPAFAHLKVGVGHRLDAQASGVLVLGVGHGCRLLTDMYNAHLTKDYTVRGLLGKATDDFREDGRLVEKTTYDHVTREKLDRILAVIQGSHQKALVMYSNLDLKTQEAYEMAVRGLIRPMNKSPMLITGIRCLYFAPPEFLLEVQCMHETQKELRKLVHEIGLELKTTAVCTQVRRTRDGFFTLDSALLRTQWDLTNIQDAIRAATPQVAAELEKSLSPGLDTKQLPSPGWSWDSQGPSSTLGLERGAGQ</sequence>
<proteinExistence type="evidence at protein level"/>
<name>TRUB2_HUMAN</name>